<reference key="1">
    <citation type="journal article" date="2008" name="PLoS Genet.">
        <title>Complete genome sequence of the N2-fixing broad host range endophyte Klebsiella pneumoniae 342 and virulence predictions verified in mice.</title>
        <authorList>
            <person name="Fouts D.E."/>
            <person name="Tyler H.L."/>
            <person name="DeBoy R.T."/>
            <person name="Daugherty S."/>
            <person name="Ren Q."/>
            <person name="Badger J.H."/>
            <person name="Durkin A.S."/>
            <person name="Huot H."/>
            <person name="Shrivastava S."/>
            <person name="Kothari S."/>
            <person name="Dodson R.J."/>
            <person name="Mohamoud Y."/>
            <person name="Khouri H."/>
            <person name="Roesch L.F.W."/>
            <person name="Krogfelt K.A."/>
            <person name="Struve C."/>
            <person name="Triplett E.W."/>
            <person name="Methe B.A."/>
        </authorList>
    </citation>
    <scope>NUCLEOTIDE SEQUENCE [LARGE SCALE GENOMIC DNA]</scope>
    <source>
        <strain>342</strain>
    </source>
</reference>
<keyword id="KW-0067">ATP-binding</keyword>
<keyword id="KW-0997">Cell inner membrane</keyword>
<keyword id="KW-1003">Cell membrane</keyword>
<keyword id="KW-0406">Ion transport</keyword>
<keyword id="KW-0460">Magnesium</keyword>
<keyword id="KW-0472">Membrane</keyword>
<keyword id="KW-0479">Metal-binding</keyword>
<keyword id="KW-0547">Nucleotide-binding</keyword>
<keyword id="KW-0597">Phosphoprotein</keyword>
<keyword id="KW-0630">Potassium</keyword>
<keyword id="KW-0633">Potassium transport</keyword>
<keyword id="KW-1278">Translocase</keyword>
<keyword id="KW-0812">Transmembrane</keyword>
<keyword id="KW-1133">Transmembrane helix</keyword>
<keyword id="KW-0813">Transport</keyword>
<comment type="function">
    <text evidence="1">Part of the high-affinity ATP-driven potassium transport (or Kdp) system, which catalyzes the hydrolysis of ATP coupled with the electrogenic transport of potassium into the cytoplasm. This subunit is responsible for energy coupling to the transport system and for the release of the potassium ions to the cytoplasm.</text>
</comment>
<comment type="catalytic activity">
    <reaction evidence="1">
        <text>K(+)(out) + ATP + H2O = K(+)(in) + ADP + phosphate + H(+)</text>
        <dbReference type="Rhea" id="RHEA:16777"/>
        <dbReference type="ChEBI" id="CHEBI:15377"/>
        <dbReference type="ChEBI" id="CHEBI:15378"/>
        <dbReference type="ChEBI" id="CHEBI:29103"/>
        <dbReference type="ChEBI" id="CHEBI:30616"/>
        <dbReference type="ChEBI" id="CHEBI:43474"/>
        <dbReference type="ChEBI" id="CHEBI:456216"/>
        <dbReference type="EC" id="7.2.2.6"/>
    </reaction>
    <physiologicalReaction direction="left-to-right" evidence="1">
        <dbReference type="Rhea" id="RHEA:16778"/>
    </physiologicalReaction>
</comment>
<comment type="subunit">
    <text evidence="1">The system is composed of three essential subunits: KdpA, KdpB and KdpC.</text>
</comment>
<comment type="subcellular location">
    <subcellularLocation>
        <location evidence="1">Cell inner membrane</location>
        <topology evidence="1">Multi-pass membrane protein</topology>
    </subcellularLocation>
</comment>
<comment type="similarity">
    <text evidence="1">Belongs to the cation transport ATPase (P-type) (TC 3.A.3) family. Type IA subfamily.</text>
</comment>
<feature type="chain" id="PRO_1000114956" description="Potassium-transporting ATPase ATP-binding subunit">
    <location>
        <begin position="1"/>
        <end position="682"/>
    </location>
</feature>
<feature type="transmembrane region" description="Helical" evidence="1">
    <location>
        <begin position="35"/>
        <end position="55"/>
    </location>
</feature>
<feature type="transmembrane region" description="Helical" evidence="1">
    <location>
        <begin position="62"/>
        <end position="82"/>
    </location>
</feature>
<feature type="transmembrane region" description="Helical" evidence="1">
    <location>
        <begin position="219"/>
        <end position="239"/>
    </location>
</feature>
<feature type="transmembrane region" description="Helical" evidence="1">
    <location>
        <begin position="254"/>
        <end position="274"/>
    </location>
</feature>
<feature type="transmembrane region" description="Helical" evidence="1">
    <location>
        <begin position="588"/>
        <end position="608"/>
    </location>
</feature>
<feature type="transmembrane region" description="Helical" evidence="1">
    <location>
        <begin position="616"/>
        <end position="636"/>
    </location>
</feature>
<feature type="transmembrane region" description="Helical" evidence="1">
    <location>
        <begin position="656"/>
        <end position="676"/>
    </location>
</feature>
<feature type="active site" description="4-aspartylphosphate intermediate" evidence="1">
    <location>
        <position position="307"/>
    </location>
</feature>
<feature type="binding site" evidence="1">
    <location>
        <position position="344"/>
    </location>
    <ligand>
        <name>ATP</name>
        <dbReference type="ChEBI" id="CHEBI:30616"/>
    </ligand>
</feature>
<feature type="binding site" evidence="1">
    <location>
        <position position="348"/>
    </location>
    <ligand>
        <name>ATP</name>
        <dbReference type="ChEBI" id="CHEBI:30616"/>
    </ligand>
</feature>
<feature type="binding site" evidence="1">
    <location>
        <begin position="377"/>
        <end position="384"/>
    </location>
    <ligand>
        <name>ATP</name>
        <dbReference type="ChEBI" id="CHEBI:30616"/>
    </ligand>
</feature>
<feature type="binding site" evidence="1">
    <location>
        <position position="395"/>
    </location>
    <ligand>
        <name>ATP</name>
        <dbReference type="ChEBI" id="CHEBI:30616"/>
    </ligand>
</feature>
<feature type="binding site" evidence="1">
    <location>
        <position position="518"/>
    </location>
    <ligand>
        <name>Mg(2+)</name>
        <dbReference type="ChEBI" id="CHEBI:18420"/>
    </ligand>
</feature>
<feature type="binding site" evidence="1">
    <location>
        <position position="522"/>
    </location>
    <ligand>
        <name>Mg(2+)</name>
        <dbReference type="ChEBI" id="CHEBI:18420"/>
    </ligand>
</feature>
<proteinExistence type="inferred from homology"/>
<name>KDPB_KLEP3</name>
<gene>
    <name evidence="1" type="primary">kdpB</name>
    <name type="ordered locus">KPK_3854</name>
</gene>
<protein>
    <recommendedName>
        <fullName evidence="1">Potassium-transporting ATPase ATP-binding subunit</fullName>
        <ecNumber evidence="1">7.2.2.6</ecNumber>
    </recommendedName>
    <alternativeName>
        <fullName evidence="1">ATP phosphohydrolase [potassium-transporting] B chain</fullName>
    </alternativeName>
    <alternativeName>
        <fullName evidence="1">Potassium-binding and translocating subunit B</fullName>
    </alternativeName>
    <alternativeName>
        <fullName evidence="1">Potassium-translocating ATPase B chain</fullName>
    </alternativeName>
</protein>
<sequence length="682" mass="72271">MSRKQLALLEPTLVRQALLDAVKKLSPMVQWRNPVMFIVWVGSLLTTLLAIAMAGGALTGSATFTAAVSIWLWFTVLFANFAEAMAEGRSKAQANSLKGVKKTAFARKLRAPQHDATVDHVPAEDLRKGDVVLVEAGDIIPCDGEVIEGGASVDESAITGESAPVIRESGGDFASVTGGTRILSDWLVIRCSVNPGETFLDRMIAMVEGAQRRKTPNEIALTILLIALTLVFLLATATIWPFSAWSGNAVSVTVLVALLVCLIPTTIGGLLSAIGVAGMSRMLGANVIATSGRAVEAAGDVDVLLLDKTGTITLGNRQASAFLPARGVEERTLADAAQLSSLADETPEGRSIVVLAKQRFNLRERDLQSLHATFVPFTAQTRMSGINIDQRMIRKGSVDAIRRHVEANGGHFPADVDKQVEEVARQGATPLVVAEGEKVLGIISLKDIVKGGIKERFAQLRKMGIKTVMITGDNRLTAAAIAAEAGVDDFLAEATPEAKLALIRQYQSEGRLVAMTGDGTNDAPALAQADVAVAMNSGTQAAKEAGNMVDLDSNPTKLIEVVHIGKQMLMTRGSLTTFSIANDVAKYFAIIPAAFAAVYPQLAMLNVMGLHSPSSAILSAVIFNALIIVFLIPLALKGVSYRPLSASAMLRRNLWIYGLGGLLVPFIGIKAIDLLLTLSGLV</sequence>
<dbReference type="EC" id="7.2.2.6" evidence="1"/>
<dbReference type="EMBL" id="CP000964">
    <property type="protein sequence ID" value="ACI09999.1"/>
    <property type="molecule type" value="Genomic_DNA"/>
</dbReference>
<dbReference type="SMR" id="B5XZE9"/>
<dbReference type="KEGG" id="kpe:KPK_3854"/>
<dbReference type="HOGENOM" id="CLU_025728_2_0_6"/>
<dbReference type="Proteomes" id="UP000001734">
    <property type="component" value="Chromosome"/>
</dbReference>
<dbReference type="GO" id="GO:0005886">
    <property type="term" value="C:plasma membrane"/>
    <property type="evidence" value="ECO:0007669"/>
    <property type="project" value="UniProtKB-SubCell"/>
</dbReference>
<dbReference type="GO" id="GO:0005524">
    <property type="term" value="F:ATP binding"/>
    <property type="evidence" value="ECO:0007669"/>
    <property type="project" value="UniProtKB-UniRule"/>
</dbReference>
<dbReference type="GO" id="GO:0016887">
    <property type="term" value="F:ATP hydrolysis activity"/>
    <property type="evidence" value="ECO:0007669"/>
    <property type="project" value="InterPro"/>
</dbReference>
<dbReference type="GO" id="GO:0000287">
    <property type="term" value="F:magnesium ion binding"/>
    <property type="evidence" value="ECO:0007669"/>
    <property type="project" value="UniProtKB-UniRule"/>
</dbReference>
<dbReference type="GO" id="GO:0008556">
    <property type="term" value="F:P-type potassium transmembrane transporter activity"/>
    <property type="evidence" value="ECO:0007669"/>
    <property type="project" value="UniProtKB-UniRule"/>
</dbReference>
<dbReference type="CDD" id="cd02078">
    <property type="entry name" value="P-type_ATPase_K"/>
    <property type="match status" value="1"/>
</dbReference>
<dbReference type="FunFam" id="2.70.150.10:FF:000010">
    <property type="entry name" value="Potassium-transporting ATPase ATP-binding subunit"/>
    <property type="match status" value="1"/>
</dbReference>
<dbReference type="FunFam" id="3.40.1110.10:FF:000007">
    <property type="entry name" value="Potassium-transporting ATPase ATP-binding subunit"/>
    <property type="match status" value="1"/>
</dbReference>
<dbReference type="Gene3D" id="3.40.1110.10">
    <property type="entry name" value="Calcium-transporting ATPase, cytoplasmic domain N"/>
    <property type="match status" value="1"/>
</dbReference>
<dbReference type="Gene3D" id="2.70.150.10">
    <property type="entry name" value="Calcium-transporting ATPase, cytoplasmic transduction domain A"/>
    <property type="match status" value="1"/>
</dbReference>
<dbReference type="Gene3D" id="3.40.50.1000">
    <property type="entry name" value="HAD superfamily/HAD-like"/>
    <property type="match status" value="1"/>
</dbReference>
<dbReference type="HAMAP" id="MF_00285">
    <property type="entry name" value="KdpB"/>
    <property type="match status" value="1"/>
</dbReference>
<dbReference type="InterPro" id="IPR023299">
    <property type="entry name" value="ATPase_P-typ_cyto_dom_N"/>
</dbReference>
<dbReference type="InterPro" id="IPR018303">
    <property type="entry name" value="ATPase_P-typ_P_site"/>
</dbReference>
<dbReference type="InterPro" id="IPR023298">
    <property type="entry name" value="ATPase_P-typ_TM_dom_sf"/>
</dbReference>
<dbReference type="InterPro" id="IPR008250">
    <property type="entry name" value="ATPase_P-typ_transduc_dom_A_sf"/>
</dbReference>
<dbReference type="InterPro" id="IPR036412">
    <property type="entry name" value="HAD-like_sf"/>
</dbReference>
<dbReference type="InterPro" id="IPR023214">
    <property type="entry name" value="HAD_sf"/>
</dbReference>
<dbReference type="InterPro" id="IPR006391">
    <property type="entry name" value="P-type_ATPase_bsu_IA"/>
</dbReference>
<dbReference type="InterPro" id="IPR001757">
    <property type="entry name" value="P_typ_ATPase"/>
</dbReference>
<dbReference type="InterPro" id="IPR044492">
    <property type="entry name" value="P_typ_ATPase_HD_dom"/>
</dbReference>
<dbReference type="NCBIfam" id="TIGR01494">
    <property type="entry name" value="ATPase_P-type"/>
    <property type="match status" value="2"/>
</dbReference>
<dbReference type="NCBIfam" id="TIGR01497">
    <property type="entry name" value="kdpB"/>
    <property type="match status" value="1"/>
</dbReference>
<dbReference type="PANTHER" id="PTHR43743">
    <property type="entry name" value="POTASSIUM-TRANSPORTING ATPASE ATP-BINDING SUBUNIT"/>
    <property type="match status" value="1"/>
</dbReference>
<dbReference type="PANTHER" id="PTHR43743:SF1">
    <property type="entry name" value="POTASSIUM-TRANSPORTING ATPASE ATP-BINDING SUBUNIT"/>
    <property type="match status" value="1"/>
</dbReference>
<dbReference type="Pfam" id="PF00122">
    <property type="entry name" value="E1-E2_ATPase"/>
    <property type="match status" value="1"/>
</dbReference>
<dbReference type="Pfam" id="PF00702">
    <property type="entry name" value="Hydrolase"/>
    <property type="match status" value="1"/>
</dbReference>
<dbReference type="PRINTS" id="PR00119">
    <property type="entry name" value="CATATPASE"/>
</dbReference>
<dbReference type="SFLD" id="SFLDG00002">
    <property type="entry name" value="C1.7:_P-type_atpase_like"/>
    <property type="match status" value="1"/>
</dbReference>
<dbReference type="SFLD" id="SFLDF00027">
    <property type="entry name" value="p-type_atpase"/>
    <property type="match status" value="1"/>
</dbReference>
<dbReference type="SUPFAM" id="SSF81653">
    <property type="entry name" value="Calcium ATPase, transduction domain A"/>
    <property type="match status" value="1"/>
</dbReference>
<dbReference type="SUPFAM" id="SSF81665">
    <property type="entry name" value="Calcium ATPase, transmembrane domain M"/>
    <property type="match status" value="1"/>
</dbReference>
<dbReference type="SUPFAM" id="SSF56784">
    <property type="entry name" value="HAD-like"/>
    <property type="match status" value="1"/>
</dbReference>
<dbReference type="SUPFAM" id="SSF81660">
    <property type="entry name" value="Metal cation-transporting ATPase, ATP-binding domain N"/>
    <property type="match status" value="1"/>
</dbReference>
<dbReference type="PROSITE" id="PS00154">
    <property type="entry name" value="ATPASE_E1_E2"/>
    <property type="match status" value="1"/>
</dbReference>
<accession>B5XZE9</accession>
<evidence type="ECO:0000255" key="1">
    <source>
        <dbReference type="HAMAP-Rule" id="MF_00285"/>
    </source>
</evidence>
<organism>
    <name type="scientific">Klebsiella pneumoniae (strain 342)</name>
    <dbReference type="NCBI Taxonomy" id="507522"/>
    <lineage>
        <taxon>Bacteria</taxon>
        <taxon>Pseudomonadati</taxon>
        <taxon>Pseudomonadota</taxon>
        <taxon>Gammaproteobacteria</taxon>
        <taxon>Enterobacterales</taxon>
        <taxon>Enterobacteriaceae</taxon>
        <taxon>Klebsiella/Raoultella group</taxon>
        <taxon>Klebsiella</taxon>
        <taxon>Klebsiella pneumoniae complex</taxon>
    </lineage>
</organism>